<evidence type="ECO:0000250" key="1">
    <source>
        <dbReference type="UniProtKB" id="Q289M7"/>
    </source>
</evidence>
<evidence type="ECO:0000255" key="2">
    <source>
        <dbReference type="HAMAP-Rule" id="MF_04072"/>
    </source>
</evidence>
<evidence type="ECO:0000305" key="3"/>
<feature type="signal peptide" evidence="2">
    <location>
        <begin position="1"/>
        <end position="17"/>
    </location>
</feature>
<feature type="chain" id="PRO_0000440456" description="Hemagglutinin" evidence="2">
    <location>
        <begin position="18"/>
        <end position="566"/>
    </location>
</feature>
<feature type="chain" id="PRO_0000039081" description="Hemagglutinin HA1 chain" evidence="2">
    <location>
        <begin position="18"/>
        <end position="343"/>
    </location>
</feature>
<feature type="chain" id="PRO_0000039082" description="Hemagglutinin HA2 chain" evidence="2">
    <location>
        <begin position="345"/>
        <end position="566"/>
    </location>
</feature>
<feature type="topological domain" description="Extracellular" evidence="2">
    <location>
        <begin position="18"/>
        <end position="529"/>
    </location>
</feature>
<feature type="transmembrane region" description="Helical" evidence="2">
    <location>
        <begin position="530"/>
        <end position="550"/>
    </location>
</feature>
<feature type="topological domain" description="Cytoplasmic" evidence="2">
    <location>
        <begin position="551"/>
        <end position="566"/>
    </location>
</feature>
<feature type="site" description="Cleavage; by host" evidence="2">
    <location>
        <begin position="344"/>
        <end position="345"/>
    </location>
</feature>
<feature type="lipid moiety-binding region" description="S-palmitoyl cysteine; by host" evidence="2">
    <location>
        <position position="555"/>
    </location>
</feature>
<feature type="lipid moiety-binding region" description="S-palmitoyl cysteine; by host" evidence="2">
    <location>
        <position position="562"/>
    </location>
</feature>
<feature type="lipid moiety-binding region" description="S-palmitoyl cysteine; by host" evidence="2">
    <location>
        <position position="565"/>
    </location>
</feature>
<feature type="glycosylation site" description="N-linked (GlcNAc...) asparagine; by host" evidence="2">
    <location>
        <position position="27"/>
    </location>
</feature>
<feature type="glycosylation site" description="N-linked (GlcNAc...) asparagine; by host" evidence="2">
    <location>
        <position position="28"/>
    </location>
</feature>
<feature type="glycosylation site" description="N-linked (GlcNAc...) asparagine; by host" evidence="2">
    <location>
        <position position="40"/>
    </location>
</feature>
<feature type="glycosylation site" description="N-linked (GlcNAc...) asparagine; by host" evidence="2">
    <location>
        <position position="104"/>
    </location>
</feature>
<feature type="glycosylation site" description="N-linked (GlcNAc...) asparagine; by host" evidence="2">
    <location>
        <position position="304"/>
    </location>
</feature>
<feature type="glycosylation site" description="N-linked (GlcNAc...) asparagine; by host" evidence="2">
    <location>
        <position position="498"/>
    </location>
</feature>
<feature type="disulfide bond" description="Interchain (between HA1 and HA2 chains)" evidence="2">
    <location>
        <begin position="21"/>
        <end position="481"/>
    </location>
</feature>
<feature type="disulfide bond" evidence="2">
    <location>
        <begin position="59"/>
        <end position="292"/>
    </location>
</feature>
<feature type="disulfide bond" evidence="2">
    <location>
        <begin position="72"/>
        <end position="84"/>
    </location>
</feature>
<feature type="disulfide bond" evidence="2">
    <location>
        <begin position="107"/>
        <end position="153"/>
    </location>
</feature>
<feature type="disulfide bond" evidence="2">
    <location>
        <begin position="296"/>
        <end position="320"/>
    </location>
</feature>
<feature type="disulfide bond" evidence="2">
    <location>
        <begin position="488"/>
        <end position="492"/>
    </location>
</feature>
<organism>
    <name type="scientific">Influenza A virus (strain A/Swine/New Jersey/11/1976 H1N1)</name>
    <dbReference type="NCBI Taxonomy" id="186460"/>
    <lineage>
        <taxon>Viruses</taxon>
        <taxon>Riboviria</taxon>
        <taxon>Orthornavirae</taxon>
        <taxon>Negarnaviricota</taxon>
        <taxon>Polyploviricotina</taxon>
        <taxon>Insthoviricetes</taxon>
        <taxon>Articulavirales</taxon>
        <taxon>Orthomyxoviridae</taxon>
        <taxon>Alphainfluenzavirus</taxon>
        <taxon>Alphainfluenzavirus influenzae</taxon>
        <taxon>Influenza A virus</taxon>
    </lineage>
</organism>
<proteinExistence type="inferred from homology"/>
<name>HEMA_I76AI</name>
<keyword id="KW-1167">Clathrin- and caveolin-independent endocytosis of virus by host</keyword>
<keyword id="KW-1165">Clathrin-mediated endocytosis of virus by host</keyword>
<keyword id="KW-1015">Disulfide bond</keyword>
<keyword id="KW-1170">Fusion of virus membrane with host endosomal membrane</keyword>
<keyword id="KW-1168">Fusion of virus membrane with host membrane</keyword>
<keyword id="KW-0325">Glycoprotein</keyword>
<keyword id="KW-0348">Hemagglutinin</keyword>
<keyword id="KW-1032">Host cell membrane</keyword>
<keyword id="KW-1043">Host membrane</keyword>
<keyword id="KW-0945">Host-virus interaction</keyword>
<keyword id="KW-0449">Lipoprotein</keyword>
<keyword id="KW-0472">Membrane</keyword>
<keyword id="KW-0564">Palmitate</keyword>
<keyword id="KW-0732">Signal</keyword>
<keyword id="KW-0812">Transmembrane</keyword>
<keyword id="KW-1133">Transmembrane helix</keyword>
<keyword id="KW-1161">Viral attachment to host cell</keyword>
<keyword id="KW-0261">Viral envelope protein</keyword>
<keyword id="KW-1162">Viral penetration into host cytoplasm</keyword>
<keyword id="KW-0946">Virion</keyword>
<keyword id="KW-1164">Virus endocytosis by host</keyword>
<keyword id="KW-1160">Virus entry into host cell</keyword>
<dbReference type="EMBL" id="K00992">
    <property type="protein sequence ID" value="AAB39851.1"/>
    <property type="molecule type" value="Genomic_RNA"/>
</dbReference>
<dbReference type="SMR" id="P03455"/>
<dbReference type="GlyCosmos" id="P03455">
    <property type="glycosylation" value="6 sites, No reported glycans"/>
</dbReference>
<dbReference type="ABCD" id="P03455">
    <property type="antibodies" value="3 sequenced antibodies"/>
</dbReference>
<dbReference type="GO" id="GO:0020002">
    <property type="term" value="C:host cell plasma membrane"/>
    <property type="evidence" value="ECO:0007669"/>
    <property type="project" value="UniProtKB-SubCell"/>
</dbReference>
<dbReference type="GO" id="GO:0016020">
    <property type="term" value="C:membrane"/>
    <property type="evidence" value="ECO:0007669"/>
    <property type="project" value="UniProtKB-UniRule"/>
</dbReference>
<dbReference type="GO" id="GO:0019031">
    <property type="term" value="C:viral envelope"/>
    <property type="evidence" value="ECO:0007669"/>
    <property type="project" value="UniProtKB-UniRule"/>
</dbReference>
<dbReference type="GO" id="GO:0055036">
    <property type="term" value="C:virion membrane"/>
    <property type="evidence" value="ECO:0007669"/>
    <property type="project" value="UniProtKB-SubCell"/>
</dbReference>
<dbReference type="GO" id="GO:0046789">
    <property type="term" value="F:host cell surface receptor binding"/>
    <property type="evidence" value="ECO:0007669"/>
    <property type="project" value="UniProtKB-UniRule"/>
</dbReference>
<dbReference type="GO" id="GO:0075512">
    <property type="term" value="P:clathrin-dependent endocytosis of virus by host cell"/>
    <property type="evidence" value="ECO:0007669"/>
    <property type="project" value="UniProtKB-UniRule"/>
</dbReference>
<dbReference type="GO" id="GO:0039654">
    <property type="term" value="P:fusion of virus membrane with host endosome membrane"/>
    <property type="evidence" value="ECO:0007669"/>
    <property type="project" value="UniProtKB-UniRule"/>
</dbReference>
<dbReference type="GO" id="GO:0019064">
    <property type="term" value="P:fusion of virus membrane with host plasma membrane"/>
    <property type="evidence" value="ECO:0007669"/>
    <property type="project" value="InterPro"/>
</dbReference>
<dbReference type="GO" id="GO:0046761">
    <property type="term" value="P:viral budding from plasma membrane"/>
    <property type="evidence" value="ECO:0007669"/>
    <property type="project" value="UniProtKB-UniRule"/>
</dbReference>
<dbReference type="GO" id="GO:0019062">
    <property type="term" value="P:virion attachment to host cell"/>
    <property type="evidence" value="ECO:0007669"/>
    <property type="project" value="UniProtKB-KW"/>
</dbReference>
<dbReference type="FunFam" id="3.90.20.10:FF:000002">
    <property type="entry name" value="Hemagglutinin"/>
    <property type="match status" value="1"/>
</dbReference>
<dbReference type="Gene3D" id="3.90.20.10">
    <property type="match status" value="1"/>
</dbReference>
<dbReference type="Gene3D" id="3.90.209.20">
    <property type="match status" value="1"/>
</dbReference>
<dbReference type="Gene3D" id="2.10.77.10">
    <property type="entry name" value="Hemagglutinin Chain A, Domain 2"/>
    <property type="match status" value="1"/>
</dbReference>
<dbReference type="HAMAP" id="MF_04072">
    <property type="entry name" value="INFV_HEMA"/>
    <property type="match status" value="1"/>
</dbReference>
<dbReference type="InterPro" id="IPR008980">
    <property type="entry name" value="Capsid_hemagglutn"/>
</dbReference>
<dbReference type="InterPro" id="IPR013828">
    <property type="entry name" value="Hemagglutn_HA1_a/b_dom_sf"/>
</dbReference>
<dbReference type="InterPro" id="IPR000149">
    <property type="entry name" value="Hemagglutn_influenz_A"/>
</dbReference>
<dbReference type="InterPro" id="IPR001364">
    <property type="entry name" value="Hemagglutn_influenz_A/B"/>
</dbReference>
<dbReference type="Pfam" id="PF00509">
    <property type="entry name" value="Hemagglutinin"/>
    <property type="match status" value="1"/>
</dbReference>
<dbReference type="PRINTS" id="PR00330">
    <property type="entry name" value="HEMAGGLUTN1"/>
</dbReference>
<dbReference type="PRINTS" id="PR00329">
    <property type="entry name" value="HEMAGGLUTN12"/>
</dbReference>
<dbReference type="SUPFAM" id="SSF58064">
    <property type="entry name" value="Influenza hemagglutinin (stalk)"/>
    <property type="match status" value="1"/>
</dbReference>
<dbReference type="SUPFAM" id="SSF49818">
    <property type="entry name" value="Viral protein domain"/>
    <property type="match status" value="1"/>
</dbReference>
<reference key="1">
    <citation type="journal article" date="1983" name="Proc. Natl. Acad. Sci. U.S.A.">
        <title>Hemagglutinin of swine influenza virus: a single amino acid change pleiotropically affects viral antigenicity and replication.</title>
        <authorList>
            <person name="Both G.W."/>
            <person name="Shi C.H."/>
            <person name="Kilbourne E.D."/>
        </authorList>
    </citation>
    <scope>NUCLEOTIDE SEQUENCE [GENOMIC RNA]</scope>
</reference>
<comment type="function">
    <text>Binds to sialic acid-containing receptors on the cell surface, bringing about the attachment of the virus particle to the cell. This attachment induces virion internalization of about two third of the virus particles through clathrin-dependent endocytosis and about one third through a clathrin- and caveolin-independent pathway. Plays a major role in the determination of host range restriction and virulence. Class I viral fusion protein. Responsible for penetration of the virus into the cell cytoplasm by mediating the fusion of the membrane of the endocytosed virus particle with the endosomal membrane. Low pH in endosomes induces an irreversible conformational change in HA2, releasing the fusion hydrophobic peptide. Several trimers are required to form a competent fusion pore.</text>
</comment>
<comment type="function">
    <text evidence="2">Binds to sialic acid-containing receptors on the cell surface, bringing about the attachment of the virus particle to the cell. This attachment induces virion internalization either through clathrin-dependent endocytosis or through clathrin- and caveolin-independent pathway. Plays a major role in the determination of host range restriction and virulence. Class I viral fusion protein. Responsible for penetration of the virus into the cell cytoplasm by mediating the fusion of the membrane of the endocytosed virus particle with the endosomal membrane. Low pH in endosomes induces an irreversible conformational change in HA2, releasing the fusion hydrophobic peptide. Several trimers are required to form a competent fusion pore.</text>
</comment>
<comment type="subunit">
    <text evidence="1">Homotrimer of disulfide-linked HA1-HA2. Interacts with human CACNA1C.</text>
</comment>
<comment type="subcellular location">
    <subcellularLocation>
        <location evidence="2">Virion membrane</location>
        <topology evidence="2">Single-pass type I membrane protein</topology>
    </subcellularLocation>
    <subcellularLocation>
        <location evidence="2">Host apical cell membrane</location>
        <topology evidence="2">Single-pass type I membrane protein</topology>
    </subcellularLocation>
    <text evidence="2">Targeted to the apical plasma membrane in epithelial polarized cells through a signal present in the transmembrane domain. Associated with glycosphingolipid- and cholesterol-enriched detergent-resistant lipid rafts.</text>
</comment>
<comment type="PTM">
    <text evidence="2">Palmitoylated.</text>
</comment>
<comment type="PTM">
    <text evidence="2">In natural infection, inactive HA is matured into HA1 and HA2 outside the cell by one or more trypsin-like, arginine-specific endoprotease secreted by the bronchial epithelial cells. One identified protease that may be involved in this process is secreted in lungs by club cells.</text>
</comment>
<comment type="miscellaneous">
    <text>Major glycoprotein, comprises over 80% of the envelope proteins present in virus particle.</text>
</comment>
<comment type="miscellaneous">
    <text>The extent of infection into host organism is determined by HA. Influenza viruses bud from the apical surface of polarized epithelial cells (e.g. bronchial epithelial cells) into lumen of lungs and are therefore usually pneumotropic. The reason is that HA is cleaved by tryptase clara which is restricted to lungs. However, HAs of H5 and H7 pantropic avian viruses subtypes can be cleaved by furin and subtilisin-type enzymes, allowing the virus to grow in other organs than lungs.</text>
</comment>
<comment type="miscellaneous">
    <text evidence="3">The influenza A genome consist of 8 RNA segments. Genetic variation of hemagglutinin and/or neuraminidase genes results in the emergence of new influenza strains. The mechanism of variation can be the result of point mutations or the result of genetic reassortment between segments of two different strains.</text>
</comment>
<comment type="similarity">
    <text evidence="2">Belongs to the influenza viruses hemagglutinin family.</text>
</comment>
<protein>
    <recommendedName>
        <fullName evidence="2">Hemagglutinin</fullName>
    </recommendedName>
    <component>
        <recommendedName>
            <fullName evidence="2">Hemagglutinin HA1 chain</fullName>
        </recommendedName>
    </component>
    <component>
        <recommendedName>
            <fullName evidence="2">Hemagglutinin HA2 chain</fullName>
        </recommendedName>
    </component>
</protein>
<sequence length="566" mass="63304">MKAILLVLLCTFAATNADTLCIGYHANNSTDTVDTVLEKNVTVTHSVNLLEDRHNGKLCKLGGIAPLHLGKCNIAGRLLGNPECELLLTVSSWSYIVETSKSDNGTCYPGDFINYEELREQLSSVSSFERFEIFPKTSSWPNHETNRGVTAACPYAGANSFYRNLIWLVKKENSYPKLSKSYVNNKGKEVLVLWGIHHPPTSTDQQSLYQNADAYVFVGSSKYNRKFKPEIAARPKVRGQAGRMSYYWTLIEPGDTITFEATGNLVVPRYAFAMNRGSGSGIIIWDAPVHDCNTKCQTPKGAINTSLPFQNIHPVTIGECPKYVKSTKLRMATGLRNVPSIQSRGLFGAIAGFIEGGWTGMIDGWYGYHHQNEQGSGYAADQRSTQNAIDGITNKVNSVIEKMNTQFTAVGKEFNHLEKRIENLNKKVDDGFLDIWTYNAELLVLLENERTLDFHDSNVKNLYEKVRSQLRNNAKEIGNGCFEFYHKCDDTCMESVKNGTYDYPKYSEESKLNREEIDGVKLESTRIYQILAIYSTVASSLVLLVSLGAISFWMCSNGSLQCRICI</sequence>
<gene>
    <name evidence="2" type="primary">HA</name>
</gene>
<organismHost>
    <name type="scientific">Aves</name>
    <dbReference type="NCBI Taxonomy" id="8782"/>
</organismHost>
<organismHost>
    <name type="scientific">Homo sapiens</name>
    <name type="common">Human</name>
    <dbReference type="NCBI Taxonomy" id="9606"/>
</organismHost>
<organismHost>
    <name type="scientific">Sus scrofa</name>
    <name type="common">Pig</name>
    <dbReference type="NCBI Taxonomy" id="9823"/>
</organismHost>
<accession>P03455</accession>